<keyword id="KW-0521">NADP</keyword>
<keyword id="KW-0560">Oxidoreductase</keyword>
<keyword id="KW-0627">Porphyrin biosynthesis</keyword>
<gene>
    <name evidence="1" type="primary">hemA</name>
    <name type="ordered locus">MW1616</name>
</gene>
<sequence>MHFIAISINHRTADVALREQVAFRDDALRIAHEDLYETKSILENVILSTCNRTEVYAVVDQIHTGRYYIQRFLARAFGFEVDDIKAMSEVKVGDEAVEHLLRVTSGLDSIVLGETQILGQIRDAFFLAQSTGTTGTIFNHLFKQAITFAKRAHNETDIADNAVSVSYAAVELAKKVFGKLKSKQAIIIGAGEMSELSLLNLLGSGITDITVVNRTIENAMKLAAKHQVKYDELSSLPNLLESADIVISSTSAQSYIITNEMIERIAENRKQDSLVLIDIAVPRDIEPGISAITNIFNYDVDDLKGLVDANLRERQLAAATISEQIPAEIHAHNEWISMLGVVPVIRALREKAMAIQAETMDSIDRKLPGLSERERKIISKHTKSIINQMLKDPIKQAKELSSDKKSNEKLELFQNIFDIEAECPHEQAKQQKESKVKEISARRIFSFE</sequence>
<protein>
    <recommendedName>
        <fullName evidence="1">Glutamyl-tRNA reductase</fullName>
        <shortName evidence="1">GluTR</shortName>
        <ecNumber evidence="1">1.2.1.70</ecNumber>
    </recommendedName>
</protein>
<organism>
    <name type="scientific">Staphylococcus aureus (strain MW2)</name>
    <dbReference type="NCBI Taxonomy" id="196620"/>
    <lineage>
        <taxon>Bacteria</taxon>
        <taxon>Bacillati</taxon>
        <taxon>Bacillota</taxon>
        <taxon>Bacilli</taxon>
        <taxon>Bacillales</taxon>
        <taxon>Staphylococcaceae</taxon>
        <taxon>Staphylococcus</taxon>
    </lineage>
</organism>
<dbReference type="EC" id="1.2.1.70" evidence="1"/>
<dbReference type="EMBL" id="BA000033">
    <property type="protein sequence ID" value="BAB95481.1"/>
    <property type="molecule type" value="Genomic_DNA"/>
</dbReference>
<dbReference type="RefSeq" id="WP_000545451.1">
    <property type="nucleotide sequence ID" value="NC_003923.1"/>
</dbReference>
<dbReference type="SMR" id="P64332"/>
<dbReference type="KEGG" id="sam:MW1616"/>
<dbReference type="HOGENOM" id="CLU_035113_2_2_9"/>
<dbReference type="UniPathway" id="UPA00251">
    <property type="reaction ID" value="UER00316"/>
</dbReference>
<dbReference type="GO" id="GO:0008883">
    <property type="term" value="F:glutamyl-tRNA reductase activity"/>
    <property type="evidence" value="ECO:0007669"/>
    <property type="project" value="UniProtKB-UniRule"/>
</dbReference>
<dbReference type="GO" id="GO:0050661">
    <property type="term" value="F:NADP binding"/>
    <property type="evidence" value="ECO:0007669"/>
    <property type="project" value="InterPro"/>
</dbReference>
<dbReference type="GO" id="GO:0006782">
    <property type="term" value="P:protoporphyrinogen IX biosynthetic process"/>
    <property type="evidence" value="ECO:0007669"/>
    <property type="project" value="UniProtKB-UniRule"/>
</dbReference>
<dbReference type="CDD" id="cd05213">
    <property type="entry name" value="NAD_bind_Glutamyl_tRNA_reduct"/>
    <property type="match status" value="1"/>
</dbReference>
<dbReference type="FunFam" id="3.30.460.30:FF:000001">
    <property type="entry name" value="Glutamyl-tRNA reductase"/>
    <property type="match status" value="1"/>
</dbReference>
<dbReference type="FunFam" id="3.40.50.720:FF:000031">
    <property type="entry name" value="Glutamyl-tRNA reductase"/>
    <property type="match status" value="1"/>
</dbReference>
<dbReference type="Gene3D" id="3.30.460.30">
    <property type="entry name" value="Glutamyl-tRNA reductase, N-terminal domain"/>
    <property type="match status" value="1"/>
</dbReference>
<dbReference type="Gene3D" id="3.40.50.720">
    <property type="entry name" value="NAD(P)-binding Rossmann-like Domain"/>
    <property type="match status" value="1"/>
</dbReference>
<dbReference type="HAMAP" id="MF_00087">
    <property type="entry name" value="Glu_tRNA_reductase"/>
    <property type="match status" value="1"/>
</dbReference>
<dbReference type="InterPro" id="IPR000343">
    <property type="entry name" value="4pyrrol_synth_GluRdtase"/>
</dbReference>
<dbReference type="InterPro" id="IPR015896">
    <property type="entry name" value="4pyrrol_synth_GluRdtase_dimer"/>
</dbReference>
<dbReference type="InterPro" id="IPR015895">
    <property type="entry name" value="4pyrrol_synth_GluRdtase_N"/>
</dbReference>
<dbReference type="InterPro" id="IPR018214">
    <property type="entry name" value="GluRdtase_CS"/>
</dbReference>
<dbReference type="InterPro" id="IPR036453">
    <property type="entry name" value="GluRdtase_dimer_dom_sf"/>
</dbReference>
<dbReference type="InterPro" id="IPR036343">
    <property type="entry name" value="GluRdtase_N_sf"/>
</dbReference>
<dbReference type="InterPro" id="IPR036291">
    <property type="entry name" value="NAD(P)-bd_dom_sf"/>
</dbReference>
<dbReference type="InterPro" id="IPR006151">
    <property type="entry name" value="Shikm_DH/Glu-tRNA_Rdtase"/>
</dbReference>
<dbReference type="NCBIfam" id="TIGR01035">
    <property type="entry name" value="hemA"/>
    <property type="match status" value="1"/>
</dbReference>
<dbReference type="PANTHER" id="PTHR43120">
    <property type="entry name" value="GLUTAMYL-TRNA REDUCTASE 1, CHLOROPLASTIC"/>
    <property type="match status" value="1"/>
</dbReference>
<dbReference type="PANTHER" id="PTHR43120:SF1">
    <property type="entry name" value="GLUTAMYL-TRNA REDUCTASE 1, CHLOROPLASTIC"/>
    <property type="match status" value="1"/>
</dbReference>
<dbReference type="Pfam" id="PF00745">
    <property type="entry name" value="GlutR_dimer"/>
    <property type="match status" value="1"/>
</dbReference>
<dbReference type="Pfam" id="PF05201">
    <property type="entry name" value="GlutR_N"/>
    <property type="match status" value="1"/>
</dbReference>
<dbReference type="Pfam" id="PF01488">
    <property type="entry name" value="Shikimate_DH"/>
    <property type="match status" value="1"/>
</dbReference>
<dbReference type="PIRSF" id="PIRSF000445">
    <property type="entry name" value="4pyrrol_synth_GluRdtase"/>
    <property type="match status" value="1"/>
</dbReference>
<dbReference type="SUPFAM" id="SSF69742">
    <property type="entry name" value="Glutamyl tRNA-reductase catalytic, N-terminal domain"/>
    <property type="match status" value="1"/>
</dbReference>
<dbReference type="SUPFAM" id="SSF69075">
    <property type="entry name" value="Glutamyl tRNA-reductase dimerization domain"/>
    <property type="match status" value="1"/>
</dbReference>
<dbReference type="SUPFAM" id="SSF51735">
    <property type="entry name" value="NAD(P)-binding Rossmann-fold domains"/>
    <property type="match status" value="1"/>
</dbReference>
<dbReference type="PROSITE" id="PS00747">
    <property type="entry name" value="GLUTR"/>
    <property type="match status" value="1"/>
</dbReference>
<comment type="function">
    <text evidence="1">Catalyzes the NADPH-dependent reduction of glutamyl-tRNA(Glu) to glutamate 1-semialdehyde (GSA).</text>
</comment>
<comment type="catalytic activity">
    <reaction evidence="1">
        <text>(S)-4-amino-5-oxopentanoate + tRNA(Glu) + NADP(+) = L-glutamyl-tRNA(Glu) + NADPH + H(+)</text>
        <dbReference type="Rhea" id="RHEA:12344"/>
        <dbReference type="Rhea" id="RHEA-COMP:9663"/>
        <dbReference type="Rhea" id="RHEA-COMP:9680"/>
        <dbReference type="ChEBI" id="CHEBI:15378"/>
        <dbReference type="ChEBI" id="CHEBI:57501"/>
        <dbReference type="ChEBI" id="CHEBI:57783"/>
        <dbReference type="ChEBI" id="CHEBI:58349"/>
        <dbReference type="ChEBI" id="CHEBI:78442"/>
        <dbReference type="ChEBI" id="CHEBI:78520"/>
        <dbReference type="EC" id="1.2.1.70"/>
    </reaction>
</comment>
<comment type="pathway">
    <text evidence="1">Porphyrin-containing compound metabolism; protoporphyrin-IX biosynthesis; 5-aminolevulinate from L-glutamyl-tRNA(Glu): step 1/2.</text>
</comment>
<comment type="subunit">
    <text evidence="1">Homodimer.</text>
</comment>
<comment type="domain">
    <text evidence="1">Possesses an unusual extended V-shaped dimeric structure with each monomer consisting of three distinct domains arranged along a curved 'spinal' alpha-helix. The N-terminal catalytic domain specifically recognizes the glutamate moiety of the substrate. The second domain is the NADPH-binding domain, and the third C-terminal domain is responsible for dimerization.</text>
</comment>
<comment type="miscellaneous">
    <text evidence="1">During catalysis, the active site Cys acts as a nucleophile attacking the alpha-carbonyl group of tRNA-bound glutamate with the formation of a thioester intermediate between enzyme and glutamate, and the concomitant release of tRNA(Glu). The thioester intermediate is finally reduced by direct hydride transfer from NADPH, to form the product GSA.</text>
</comment>
<comment type="similarity">
    <text evidence="1">Belongs to the glutamyl-tRNA reductase family.</text>
</comment>
<reference key="1">
    <citation type="journal article" date="2002" name="Lancet">
        <title>Genome and virulence determinants of high virulence community-acquired MRSA.</title>
        <authorList>
            <person name="Baba T."/>
            <person name="Takeuchi F."/>
            <person name="Kuroda M."/>
            <person name="Yuzawa H."/>
            <person name="Aoki K."/>
            <person name="Oguchi A."/>
            <person name="Nagai Y."/>
            <person name="Iwama N."/>
            <person name="Asano K."/>
            <person name="Naimi T."/>
            <person name="Kuroda H."/>
            <person name="Cui L."/>
            <person name="Yamamoto K."/>
            <person name="Hiramatsu K."/>
        </authorList>
    </citation>
    <scope>NUCLEOTIDE SEQUENCE [LARGE SCALE GENOMIC DNA]</scope>
    <source>
        <strain>MW2</strain>
    </source>
</reference>
<feature type="chain" id="PRO_0000114072" description="Glutamyl-tRNA reductase">
    <location>
        <begin position="1"/>
        <end position="448"/>
    </location>
</feature>
<feature type="active site" description="Nucleophile" evidence="1">
    <location>
        <position position="50"/>
    </location>
</feature>
<feature type="binding site" evidence="1">
    <location>
        <begin position="49"/>
        <end position="52"/>
    </location>
    <ligand>
        <name>substrate</name>
    </ligand>
</feature>
<feature type="binding site" evidence="1">
    <location>
        <position position="109"/>
    </location>
    <ligand>
        <name>substrate</name>
    </ligand>
</feature>
<feature type="binding site" evidence="1">
    <location>
        <begin position="114"/>
        <end position="116"/>
    </location>
    <ligand>
        <name>substrate</name>
    </ligand>
</feature>
<feature type="binding site" evidence="1">
    <location>
        <position position="120"/>
    </location>
    <ligand>
        <name>substrate</name>
    </ligand>
</feature>
<feature type="binding site" evidence="1">
    <location>
        <begin position="189"/>
        <end position="194"/>
    </location>
    <ligand>
        <name>NADP(+)</name>
        <dbReference type="ChEBI" id="CHEBI:58349"/>
    </ligand>
</feature>
<feature type="site" description="Important for activity" evidence="1">
    <location>
        <position position="99"/>
    </location>
</feature>
<accession>P64332</accession>
<accession>Q99TI9</accession>
<name>HEM1_STAAW</name>
<evidence type="ECO:0000255" key="1">
    <source>
        <dbReference type="HAMAP-Rule" id="MF_00087"/>
    </source>
</evidence>
<proteinExistence type="inferred from homology"/>